<evidence type="ECO:0000250" key="1"/>
<evidence type="ECO:0000255" key="2">
    <source>
        <dbReference type="HAMAP-Rule" id="MF_00100"/>
    </source>
</evidence>
<evidence type="ECO:0000256" key="3">
    <source>
        <dbReference type="SAM" id="MobiDB-lite"/>
    </source>
</evidence>
<organism>
    <name type="scientific">Brucella anthropi (strain ATCC 49188 / DSM 6882 / CCUG 24695 / JCM 21032 / LMG 3331 / NBRC 15819 / NCTC 12168 / Alc 37)</name>
    <name type="common">Ochrobactrum anthropi</name>
    <dbReference type="NCBI Taxonomy" id="439375"/>
    <lineage>
        <taxon>Bacteria</taxon>
        <taxon>Pseudomonadati</taxon>
        <taxon>Pseudomonadota</taxon>
        <taxon>Alphaproteobacteria</taxon>
        <taxon>Hyphomicrobiales</taxon>
        <taxon>Brucellaceae</taxon>
        <taxon>Brucella/Ochrobactrum group</taxon>
        <taxon>Brucella</taxon>
    </lineage>
</organism>
<protein>
    <recommendedName>
        <fullName evidence="2">Translation initiation factor IF-2</fullName>
    </recommendedName>
</protein>
<sequence>MSDKTNDDKTLSVNTKKTLTMKRPGVEQSTVRQNFSHGRTKAVVVETKKRKFSRPDEKPEVEAAAPKPAAPAPAAPAPAASTPAPAQAAQPAQAAPVVRAPAPATPAPKPAAPAAPVTKPHVAQQRPAQQRPGGQQAQRPRPSDRSGMVLNTLSRSEMDARRRALEEAQVREVEERARAVEEAKRRAEEDARRAKEREESARRQAEEEARLKAEADARRKAEEEAAKRMPQPEARTERRDDARPAPQGNRPQQAGRPQGNRPPQGGRPQQGGPRPAAPSLADAAPIPGKPLPQSQLRKTVASDDDDRRGGGLTAARRGAPAKPEVRAPKVVKTEDDRRRGKLTISSNLEDEGRSRSLSAMRRRQEKFKRSQMQETREKISREVTIPETITLQELAQRMTERSVDIIKYLMKQGQMMKPGDVIDADMAQLIAEEFGHTVKRVAESDVEEGIFGVADNEAALVSRPPVVTIMGHVDHGKTSLLDAIRHANVVSGEAGGITQHIGAYQVEQNGQKITFIDTPGHAAFTAMRARGAQATDIAILVVAADDSVMPQTIESINHAKAAGVPIIVAINKIDKPAADPQKVRTALLQHDVFVESMGGEVLDVEVSAKNKLNLDKLLEAILLQAEILDLKADPSRTAEGVVVEAQLDRGRGSVATVLVQTGTLHPGDILVAGSEWGRVRALVNDRGEHVKEAGPAMPVEVLGLQGTPQAGDRFAVVANEAKAREIAEYRQRLARDKAVARQSGARGSLEQMMNQLQVSGTKEFPLVIKGDVQGSIEAITNALDKLGTDEVRARIVHSGAGGITESDVSLAEASNAAIIGFNVRANKQARDAADQQGIEIRYYNIIYDLIDDVKAAMSGLLSPERRETFLGNAEILEVFNITKVGKVAGCRVTEGKVERGAGVRLIRDNVVIHEGKLKTLKRFKDEVSEVPAGQECGMAFENYDDIRAGDVIEAFRVEHVSRTL</sequence>
<dbReference type="EMBL" id="CP000758">
    <property type="protein sequence ID" value="ABS13469.1"/>
    <property type="molecule type" value="Genomic_DNA"/>
</dbReference>
<dbReference type="RefSeq" id="WP_012090991.1">
    <property type="nucleotide sequence ID" value="NC_009667.1"/>
</dbReference>
<dbReference type="SMR" id="A6WWW5"/>
<dbReference type="STRING" id="439375.Oant_0747"/>
<dbReference type="KEGG" id="oan:Oant_0747"/>
<dbReference type="PATRIC" id="fig|439375.7.peg.789"/>
<dbReference type="eggNOG" id="COG0532">
    <property type="taxonomic scope" value="Bacteria"/>
</dbReference>
<dbReference type="eggNOG" id="COG3064">
    <property type="taxonomic scope" value="Bacteria"/>
</dbReference>
<dbReference type="HOGENOM" id="CLU_006301_10_0_5"/>
<dbReference type="PhylomeDB" id="A6WWW5"/>
<dbReference type="Proteomes" id="UP000002301">
    <property type="component" value="Chromosome 1"/>
</dbReference>
<dbReference type="GO" id="GO:0005829">
    <property type="term" value="C:cytosol"/>
    <property type="evidence" value="ECO:0007669"/>
    <property type="project" value="TreeGrafter"/>
</dbReference>
<dbReference type="GO" id="GO:0005525">
    <property type="term" value="F:GTP binding"/>
    <property type="evidence" value="ECO:0007669"/>
    <property type="project" value="UniProtKB-KW"/>
</dbReference>
<dbReference type="GO" id="GO:0003924">
    <property type="term" value="F:GTPase activity"/>
    <property type="evidence" value="ECO:0007669"/>
    <property type="project" value="UniProtKB-UniRule"/>
</dbReference>
<dbReference type="GO" id="GO:0097216">
    <property type="term" value="F:guanosine tetraphosphate binding"/>
    <property type="evidence" value="ECO:0007669"/>
    <property type="project" value="UniProtKB-ARBA"/>
</dbReference>
<dbReference type="GO" id="GO:0003743">
    <property type="term" value="F:translation initiation factor activity"/>
    <property type="evidence" value="ECO:0007669"/>
    <property type="project" value="UniProtKB-UniRule"/>
</dbReference>
<dbReference type="CDD" id="cd01887">
    <property type="entry name" value="IF2_eIF5B"/>
    <property type="match status" value="1"/>
</dbReference>
<dbReference type="CDD" id="cd03702">
    <property type="entry name" value="IF2_mtIF2_II"/>
    <property type="match status" value="1"/>
</dbReference>
<dbReference type="CDD" id="cd03692">
    <property type="entry name" value="mtIF2_IVc"/>
    <property type="match status" value="1"/>
</dbReference>
<dbReference type="FunFam" id="2.40.30.10:FF:000007">
    <property type="entry name" value="Translation initiation factor IF-2"/>
    <property type="match status" value="1"/>
</dbReference>
<dbReference type="FunFam" id="2.40.30.10:FF:000008">
    <property type="entry name" value="Translation initiation factor IF-2"/>
    <property type="match status" value="1"/>
</dbReference>
<dbReference type="FunFam" id="3.40.50.10050:FF:000001">
    <property type="entry name" value="Translation initiation factor IF-2"/>
    <property type="match status" value="1"/>
</dbReference>
<dbReference type="FunFam" id="3.40.50.300:FF:000019">
    <property type="entry name" value="Translation initiation factor IF-2"/>
    <property type="match status" value="1"/>
</dbReference>
<dbReference type="Gene3D" id="3.40.50.300">
    <property type="entry name" value="P-loop containing nucleotide triphosphate hydrolases"/>
    <property type="match status" value="1"/>
</dbReference>
<dbReference type="Gene3D" id="2.40.30.10">
    <property type="entry name" value="Translation factors"/>
    <property type="match status" value="2"/>
</dbReference>
<dbReference type="Gene3D" id="3.40.50.10050">
    <property type="entry name" value="Translation initiation factor IF- 2, domain 3"/>
    <property type="match status" value="1"/>
</dbReference>
<dbReference type="HAMAP" id="MF_00100_B">
    <property type="entry name" value="IF_2_B"/>
    <property type="match status" value="1"/>
</dbReference>
<dbReference type="InterPro" id="IPR053905">
    <property type="entry name" value="EF-G-like_DII"/>
</dbReference>
<dbReference type="InterPro" id="IPR004161">
    <property type="entry name" value="EFTu-like_2"/>
</dbReference>
<dbReference type="InterPro" id="IPR013575">
    <property type="entry name" value="IF2_assoc_dom_bac"/>
</dbReference>
<dbReference type="InterPro" id="IPR044145">
    <property type="entry name" value="IF2_II"/>
</dbReference>
<dbReference type="InterPro" id="IPR006847">
    <property type="entry name" value="IF2_N"/>
</dbReference>
<dbReference type="InterPro" id="IPR027417">
    <property type="entry name" value="P-loop_NTPase"/>
</dbReference>
<dbReference type="InterPro" id="IPR005225">
    <property type="entry name" value="Small_GTP-bd"/>
</dbReference>
<dbReference type="InterPro" id="IPR000795">
    <property type="entry name" value="T_Tr_GTP-bd_dom"/>
</dbReference>
<dbReference type="InterPro" id="IPR000178">
    <property type="entry name" value="TF_IF2_bacterial-like"/>
</dbReference>
<dbReference type="InterPro" id="IPR015760">
    <property type="entry name" value="TIF_IF2"/>
</dbReference>
<dbReference type="InterPro" id="IPR023115">
    <property type="entry name" value="TIF_IF2_dom3"/>
</dbReference>
<dbReference type="InterPro" id="IPR036925">
    <property type="entry name" value="TIF_IF2_dom3_sf"/>
</dbReference>
<dbReference type="InterPro" id="IPR009000">
    <property type="entry name" value="Transl_B-barrel_sf"/>
</dbReference>
<dbReference type="NCBIfam" id="TIGR00487">
    <property type="entry name" value="IF-2"/>
    <property type="match status" value="1"/>
</dbReference>
<dbReference type="NCBIfam" id="TIGR00231">
    <property type="entry name" value="small_GTP"/>
    <property type="match status" value="1"/>
</dbReference>
<dbReference type="PANTHER" id="PTHR43381:SF5">
    <property type="entry name" value="TR-TYPE G DOMAIN-CONTAINING PROTEIN"/>
    <property type="match status" value="1"/>
</dbReference>
<dbReference type="PANTHER" id="PTHR43381">
    <property type="entry name" value="TRANSLATION INITIATION FACTOR IF-2-RELATED"/>
    <property type="match status" value="1"/>
</dbReference>
<dbReference type="Pfam" id="PF22042">
    <property type="entry name" value="EF-G_D2"/>
    <property type="match status" value="1"/>
</dbReference>
<dbReference type="Pfam" id="PF00009">
    <property type="entry name" value="GTP_EFTU"/>
    <property type="match status" value="1"/>
</dbReference>
<dbReference type="Pfam" id="PF03144">
    <property type="entry name" value="GTP_EFTU_D2"/>
    <property type="match status" value="1"/>
</dbReference>
<dbReference type="Pfam" id="PF11987">
    <property type="entry name" value="IF-2"/>
    <property type="match status" value="1"/>
</dbReference>
<dbReference type="Pfam" id="PF08364">
    <property type="entry name" value="IF2_assoc"/>
    <property type="match status" value="1"/>
</dbReference>
<dbReference type="Pfam" id="PF04760">
    <property type="entry name" value="IF2_N"/>
    <property type="match status" value="1"/>
</dbReference>
<dbReference type="SUPFAM" id="SSF52156">
    <property type="entry name" value="Initiation factor IF2/eIF5b, domain 3"/>
    <property type="match status" value="1"/>
</dbReference>
<dbReference type="SUPFAM" id="SSF52540">
    <property type="entry name" value="P-loop containing nucleoside triphosphate hydrolases"/>
    <property type="match status" value="1"/>
</dbReference>
<dbReference type="SUPFAM" id="SSF50447">
    <property type="entry name" value="Translation proteins"/>
    <property type="match status" value="2"/>
</dbReference>
<dbReference type="PROSITE" id="PS51722">
    <property type="entry name" value="G_TR_2"/>
    <property type="match status" value="1"/>
</dbReference>
<dbReference type="PROSITE" id="PS01176">
    <property type="entry name" value="IF2"/>
    <property type="match status" value="1"/>
</dbReference>
<comment type="function">
    <text evidence="2">One of the essential components for the initiation of protein synthesis. Protects formylmethionyl-tRNA from spontaneous hydrolysis and promotes its binding to the 30S ribosomal subunits. Also involved in the hydrolysis of GTP during the formation of the 70S ribosomal complex.</text>
</comment>
<comment type="subcellular location">
    <subcellularLocation>
        <location evidence="2">Cytoplasm</location>
    </subcellularLocation>
</comment>
<comment type="similarity">
    <text evidence="2">Belongs to the TRAFAC class translation factor GTPase superfamily. Classic translation factor GTPase family. IF-2 subfamily.</text>
</comment>
<reference key="1">
    <citation type="journal article" date="2011" name="J. Bacteriol.">
        <title>Genome of Ochrobactrum anthropi ATCC 49188 T, a versatile opportunistic pathogen and symbiont of several eukaryotic hosts.</title>
        <authorList>
            <person name="Chain P.S."/>
            <person name="Lang D.M."/>
            <person name="Comerci D.J."/>
            <person name="Malfatti S.A."/>
            <person name="Vergez L.M."/>
            <person name="Shin M."/>
            <person name="Ugalde R.A."/>
            <person name="Garcia E."/>
            <person name="Tolmasky M.E."/>
        </authorList>
    </citation>
    <scope>NUCLEOTIDE SEQUENCE [LARGE SCALE GENOMIC DNA]</scope>
    <source>
        <strain>ATCC 49188 / DSM 6882 / CCUG 24695 / JCM 21032 / LMG 3331 / NBRC 15819 / NCTC 12168 / Alc 37</strain>
    </source>
</reference>
<proteinExistence type="inferred from homology"/>
<name>IF2_BRUA4</name>
<gene>
    <name evidence="2" type="primary">infB</name>
    <name type="ordered locus">Oant_0747</name>
</gene>
<keyword id="KW-0963">Cytoplasm</keyword>
<keyword id="KW-0342">GTP-binding</keyword>
<keyword id="KW-0396">Initiation factor</keyword>
<keyword id="KW-0547">Nucleotide-binding</keyword>
<keyword id="KW-0648">Protein biosynthesis</keyword>
<keyword id="KW-1185">Reference proteome</keyword>
<accession>A6WWW5</accession>
<feature type="chain" id="PRO_1000008291" description="Translation initiation factor IF-2">
    <location>
        <begin position="1"/>
        <end position="964"/>
    </location>
</feature>
<feature type="domain" description="tr-type G">
    <location>
        <begin position="462"/>
        <end position="629"/>
    </location>
</feature>
<feature type="region of interest" description="Disordered" evidence="3">
    <location>
        <begin position="1"/>
        <end position="379"/>
    </location>
</feature>
<feature type="region of interest" description="G1" evidence="1">
    <location>
        <begin position="471"/>
        <end position="478"/>
    </location>
</feature>
<feature type="region of interest" description="G2" evidence="1">
    <location>
        <begin position="496"/>
        <end position="500"/>
    </location>
</feature>
<feature type="region of interest" description="G3" evidence="1">
    <location>
        <begin position="517"/>
        <end position="520"/>
    </location>
</feature>
<feature type="region of interest" description="G4" evidence="1">
    <location>
        <begin position="571"/>
        <end position="574"/>
    </location>
</feature>
<feature type="region of interest" description="G5" evidence="1">
    <location>
        <begin position="607"/>
        <end position="609"/>
    </location>
</feature>
<feature type="compositionally biased region" description="Basic and acidic residues" evidence="3">
    <location>
        <begin position="1"/>
        <end position="10"/>
    </location>
</feature>
<feature type="compositionally biased region" description="Polar residues" evidence="3">
    <location>
        <begin position="27"/>
        <end position="37"/>
    </location>
</feature>
<feature type="compositionally biased region" description="Low complexity" evidence="3">
    <location>
        <begin position="77"/>
        <end position="102"/>
    </location>
</feature>
<feature type="compositionally biased region" description="Pro residues" evidence="3">
    <location>
        <begin position="103"/>
        <end position="113"/>
    </location>
</feature>
<feature type="compositionally biased region" description="Low complexity" evidence="3">
    <location>
        <begin position="114"/>
        <end position="140"/>
    </location>
</feature>
<feature type="compositionally biased region" description="Basic and acidic residues" evidence="3">
    <location>
        <begin position="156"/>
        <end position="227"/>
    </location>
</feature>
<feature type="compositionally biased region" description="Basic and acidic residues" evidence="3">
    <location>
        <begin position="234"/>
        <end position="243"/>
    </location>
</feature>
<feature type="compositionally biased region" description="Low complexity" evidence="3">
    <location>
        <begin position="250"/>
        <end position="278"/>
    </location>
</feature>
<feature type="compositionally biased region" description="Basic and acidic residues" evidence="3">
    <location>
        <begin position="323"/>
        <end position="338"/>
    </location>
</feature>
<feature type="binding site" evidence="2">
    <location>
        <begin position="471"/>
        <end position="478"/>
    </location>
    <ligand>
        <name>GTP</name>
        <dbReference type="ChEBI" id="CHEBI:37565"/>
    </ligand>
</feature>
<feature type="binding site" evidence="2">
    <location>
        <begin position="517"/>
        <end position="521"/>
    </location>
    <ligand>
        <name>GTP</name>
        <dbReference type="ChEBI" id="CHEBI:37565"/>
    </ligand>
</feature>
<feature type="binding site" evidence="2">
    <location>
        <begin position="571"/>
        <end position="574"/>
    </location>
    <ligand>
        <name>GTP</name>
        <dbReference type="ChEBI" id="CHEBI:37565"/>
    </ligand>
</feature>